<name>DSVB_MEGG1</name>
<evidence type="ECO:0000250" key="1">
    <source>
        <dbReference type="UniProtKB" id="P45575"/>
    </source>
</evidence>
<proteinExistence type="inferred from homology"/>
<feature type="chain" id="PRO_0000080031" description="Sulfite reductase, dissimilatory-type subunit beta">
    <location>
        <begin position="1"/>
        <end position="262" status="greater than"/>
    </location>
</feature>
<feature type="binding site" evidence="1">
    <location>
        <position position="151"/>
    </location>
    <ligand>
        <name>[4Fe-4S] cluster</name>
        <dbReference type="ChEBI" id="CHEBI:49883"/>
        <label>1</label>
    </ligand>
</feature>
<feature type="binding site" evidence="1">
    <location>
        <position position="188"/>
    </location>
    <ligand>
        <name>[4Fe-4S] cluster</name>
        <dbReference type="ChEBI" id="CHEBI:49883"/>
        <label>1</label>
    </ligand>
</feature>
<feature type="binding site" evidence="1">
    <location>
        <position position="189"/>
    </location>
    <ligand>
        <name>[4Fe-4S] cluster</name>
        <dbReference type="ChEBI" id="CHEBI:49883"/>
        <label>1</label>
    </ligand>
</feature>
<feature type="binding site" evidence="1">
    <location>
        <position position="193"/>
    </location>
    <ligand>
        <name>[4Fe-4S] cluster</name>
        <dbReference type="ChEBI" id="CHEBI:49883"/>
        <label>1</label>
    </ligand>
</feature>
<feature type="binding site" description="axial binding residue" evidence="1">
    <location>
        <position position="193"/>
    </location>
    <ligand>
        <name>siroheme</name>
        <dbReference type="ChEBI" id="CHEBI:60052"/>
    </ligand>
    <ligandPart>
        <name>Fe</name>
        <dbReference type="ChEBI" id="CHEBI:18248"/>
    </ligandPart>
</feature>
<feature type="binding site" evidence="1">
    <location>
        <position position="231"/>
    </location>
    <ligand>
        <name>[4Fe-4S] cluster</name>
        <dbReference type="ChEBI" id="CHEBI:49883"/>
        <label>2</label>
    </ligand>
</feature>
<feature type="binding site" evidence="1">
    <location>
        <position position="258"/>
    </location>
    <ligand>
        <name>[4Fe-4S] cluster</name>
        <dbReference type="ChEBI" id="CHEBI:49883"/>
        <label>2</label>
    </ligand>
</feature>
<feature type="binding site" evidence="1">
    <location>
        <position position="261"/>
    </location>
    <ligand>
        <name>[4Fe-4S] cluster</name>
        <dbReference type="ChEBI" id="CHEBI:49883"/>
        <label>2</label>
    </ligand>
</feature>
<feature type="non-terminal residue">
    <location>
        <position position="262"/>
    </location>
</feature>
<organism>
    <name type="scientific">Megalodesulfovibrio gigas (strain ATCC 19364 / DSM 1382 / NCIMB 9332 / VKM B-1759)</name>
    <name type="common">Desulfovibrio gigas</name>
    <dbReference type="NCBI Taxonomy" id="1121448"/>
    <lineage>
        <taxon>Bacteria</taxon>
        <taxon>Pseudomonadati</taxon>
        <taxon>Thermodesulfobacteriota</taxon>
        <taxon>Desulfovibrionia</taxon>
        <taxon>Desulfovibrionales</taxon>
        <taxon>Desulfovibrionaceae</taxon>
        <taxon>Megalodesulfovibrio</taxon>
    </lineage>
</organism>
<sequence length="262" mass="28569">MAFISSGYNPAKPMENRITDIGPRKFTEFFPPVIAKNAGNWDYHEILEPGILVHVAKNGDKVFTVRCGAARLMSTSHIREACEIAKKFCNGHLRFTTRNNIEFMVDNEETLKALVADLKTRKFAAGSFKFPIGGTGASISNIVHTQGWVYCHTPATDASGPVKAVMDELFEEFTSMRLPAIVRVSLACCINMCGAVHCSDIGLVGIHRKPPMIDHENLANLCEIPLAVAACPTAAVKPITAEVNGQKVKSVAINNDRCMYCG</sequence>
<keyword id="KW-0004">4Fe-4S</keyword>
<keyword id="KW-0408">Iron</keyword>
<keyword id="KW-0411">Iron-sulfur</keyword>
<keyword id="KW-0479">Metal-binding</keyword>
<keyword id="KW-0560">Oxidoreductase</keyword>
<accession>P94694</accession>
<gene>
    <name type="primary">dsrB</name>
</gene>
<protein>
    <recommendedName>
        <fullName>Sulfite reductase, dissimilatory-type subunit beta</fullName>
        <ecNumber evidence="1">1.8.1.22</ecNumber>
    </recommendedName>
    <alternativeName>
        <fullName>Desulfoviridin subunit beta</fullName>
    </alternativeName>
    <alternativeName>
        <fullName>Dissimilatory sulfite reductase subunit beta</fullName>
        <shortName>dSiR beta</shortName>
    </alternativeName>
    <alternativeName>
        <fullName>Hydrogensulfite reductase subunit beta</fullName>
    </alternativeName>
</protein>
<dbReference type="EC" id="1.8.1.22" evidence="1"/>
<dbReference type="EMBL" id="U80961">
    <property type="protein sequence ID" value="AAB41002.1"/>
    <property type="molecule type" value="Genomic_DNA"/>
</dbReference>
<dbReference type="SMR" id="P94694"/>
<dbReference type="STRING" id="1121448.DGI_0689"/>
<dbReference type="GO" id="GO:0051539">
    <property type="term" value="F:4 iron, 4 sulfur cluster binding"/>
    <property type="evidence" value="ECO:0007669"/>
    <property type="project" value="UniProtKB-KW"/>
</dbReference>
<dbReference type="GO" id="GO:0018551">
    <property type="term" value="F:dissimilatory sulfite reductase (NADH) activity"/>
    <property type="evidence" value="ECO:0007669"/>
    <property type="project" value="RHEA"/>
</dbReference>
<dbReference type="GO" id="GO:0020037">
    <property type="term" value="F:heme binding"/>
    <property type="evidence" value="ECO:0007669"/>
    <property type="project" value="InterPro"/>
</dbReference>
<dbReference type="GO" id="GO:0046872">
    <property type="term" value="F:metal ion binding"/>
    <property type="evidence" value="ECO:0007669"/>
    <property type="project" value="UniProtKB-KW"/>
</dbReference>
<dbReference type="Gene3D" id="3.30.70.3340">
    <property type="match status" value="1"/>
</dbReference>
<dbReference type="Gene3D" id="3.30.413.10">
    <property type="entry name" value="Sulfite Reductase Hemoprotein, domain 1"/>
    <property type="match status" value="1"/>
</dbReference>
<dbReference type="InterPro" id="IPR005117">
    <property type="entry name" value="NiRdtase/SiRdtase_haem-b_fer"/>
</dbReference>
<dbReference type="InterPro" id="IPR036136">
    <property type="entry name" value="Nit/Sulf_reduc_fer-like_dom_sf"/>
</dbReference>
<dbReference type="InterPro" id="IPR006067">
    <property type="entry name" value="NO2/SO3_Rdtase_4Fe4S_dom"/>
</dbReference>
<dbReference type="InterPro" id="IPR045854">
    <property type="entry name" value="NO2/SO3_Rdtase_4Fe4S_sf"/>
</dbReference>
<dbReference type="Pfam" id="PF01077">
    <property type="entry name" value="NIR_SIR"/>
    <property type="match status" value="1"/>
</dbReference>
<dbReference type="Pfam" id="PF03460">
    <property type="entry name" value="NIR_SIR_ferr"/>
    <property type="match status" value="1"/>
</dbReference>
<dbReference type="SUPFAM" id="SSF54862">
    <property type="entry name" value="4Fe-4S ferredoxins"/>
    <property type="match status" value="1"/>
</dbReference>
<dbReference type="SUPFAM" id="SSF55124">
    <property type="entry name" value="Nitrite/Sulfite reductase N-terminal domain-like"/>
    <property type="match status" value="1"/>
</dbReference>
<reference key="1">
    <citation type="submission" date="1996-12" db="EMBL/GenBank/DDBJ databases">
        <authorList>
            <person name="Hipp W.M."/>
            <person name="Trueper H.G."/>
        </authorList>
    </citation>
    <scope>NUCLEOTIDE SEQUENCE [GENOMIC DNA]</scope>
    <source>
        <strain>ATCC 19364 / DSM 1382 / NCIMB 9332 / VKM B-1759</strain>
    </source>
</reference>
<comment type="function">
    <text evidence="1">Catalyzes the reduction of sulfite to sulfide. This is the terminal oxidation reaction in sulfate respiration, a process catalyzed by the sulfate-reducing bacteria.</text>
</comment>
<comment type="catalytic activity">
    <reaction evidence="1">
        <text>[DsrC protein]-trisulfide + NAD(+) + 3 H2O = [DsrC protein]-dithiol + sulfite + NADH + 3 H(+)</text>
        <dbReference type="Rhea" id="RHEA:78943"/>
        <dbReference type="Rhea" id="RHEA-COMP:11723"/>
        <dbReference type="Rhea" id="RHEA-COMP:19152"/>
        <dbReference type="ChEBI" id="CHEBI:15377"/>
        <dbReference type="ChEBI" id="CHEBI:15378"/>
        <dbReference type="ChEBI" id="CHEBI:17359"/>
        <dbReference type="ChEBI" id="CHEBI:29950"/>
        <dbReference type="ChEBI" id="CHEBI:57540"/>
        <dbReference type="ChEBI" id="CHEBI:57945"/>
        <dbReference type="ChEBI" id="CHEBI:229579"/>
        <dbReference type="EC" id="1.8.1.22"/>
    </reaction>
</comment>
<comment type="cofactor">
    <cofactor evidence="1">
        <name>[4Fe-4S] cluster</name>
        <dbReference type="ChEBI" id="CHEBI:49883"/>
    </cofactor>
    <text evidence="1">Binds 2 [4Fe-4S] clusters per subunit.</text>
</comment>
<comment type="cofactor">
    <cofactor evidence="1">
        <name>siroheme</name>
        <dbReference type="ChEBI" id="CHEBI:60052"/>
    </cofactor>
    <text evidence="1">Binds 1 siroheme per subunit.</text>
</comment>
<comment type="subunit">
    <text evidence="1">Heterohexamer of two alpha, two beta and two gamma subunits.</text>
</comment>